<gene>
    <name type="primary">PRP5</name>
    <name type="ordered locus">CAGL0K07029g</name>
</gene>
<comment type="function">
    <text evidence="1">ATP-dependent RNA helicase involved spliceosome assembly and in nuclear splicing. Catalyzes an ATP-dependent conformational change of U2 snRNP. Bridges U1 and U2 snRNPs and enables stable U2 snRNP association with intron RNA (By similarity).</text>
</comment>
<comment type="catalytic activity">
    <reaction>
        <text>ATP + H2O = ADP + phosphate + H(+)</text>
        <dbReference type="Rhea" id="RHEA:13065"/>
        <dbReference type="ChEBI" id="CHEBI:15377"/>
        <dbReference type="ChEBI" id="CHEBI:15378"/>
        <dbReference type="ChEBI" id="CHEBI:30616"/>
        <dbReference type="ChEBI" id="CHEBI:43474"/>
        <dbReference type="ChEBI" id="CHEBI:456216"/>
        <dbReference type="EC" id="3.6.4.13"/>
    </reaction>
</comment>
<comment type="subcellular location">
    <subcellularLocation>
        <location evidence="1">Nucleus</location>
    </subcellularLocation>
</comment>
<comment type="domain">
    <text>The Q motif is unique to and characteristic of the DEAD box family of RNA helicases and controls ATP binding and hydrolysis.</text>
</comment>
<comment type="similarity">
    <text evidence="5">Belongs to the DEAD box helicase family. DDX46/PRP5 subfamily.</text>
</comment>
<dbReference type="EC" id="3.6.4.13"/>
<dbReference type="EMBL" id="CR380957">
    <property type="protein sequence ID" value="CAG61490.1"/>
    <property type="molecule type" value="Genomic_DNA"/>
</dbReference>
<dbReference type="RefSeq" id="XP_448529.1">
    <property type="nucleotide sequence ID" value="XM_448529.1"/>
</dbReference>
<dbReference type="SMR" id="Q6FML5"/>
<dbReference type="FunCoup" id="Q6FML5">
    <property type="interactions" value="1144"/>
</dbReference>
<dbReference type="STRING" id="284593.Q6FML5"/>
<dbReference type="EnsemblFungi" id="CAGL0K07029g-T">
    <property type="protein sequence ID" value="CAGL0K07029g-T-p1"/>
    <property type="gene ID" value="CAGL0K07029g"/>
</dbReference>
<dbReference type="KEGG" id="cgr:2890388"/>
<dbReference type="CGD" id="CAL0134379">
    <property type="gene designation" value="CAGL0K07029g"/>
</dbReference>
<dbReference type="VEuPathDB" id="FungiDB:CAGL0K07029g"/>
<dbReference type="eggNOG" id="KOG0334">
    <property type="taxonomic scope" value="Eukaryota"/>
</dbReference>
<dbReference type="HOGENOM" id="CLU_003041_0_2_1"/>
<dbReference type="InParanoid" id="Q6FML5"/>
<dbReference type="OMA" id="FAQYVHT"/>
<dbReference type="Proteomes" id="UP000002428">
    <property type="component" value="Chromosome K"/>
</dbReference>
<dbReference type="GO" id="GO:0005634">
    <property type="term" value="C:nucleus"/>
    <property type="evidence" value="ECO:0007669"/>
    <property type="project" value="UniProtKB-SubCell"/>
</dbReference>
<dbReference type="GO" id="GO:0005524">
    <property type="term" value="F:ATP binding"/>
    <property type="evidence" value="ECO:0007669"/>
    <property type="project" value="UniProtKB-KW"/>
</dbReference>
<dbReference type="GO" id="GO:0016887">
    <property type="term" value="F:ATP hydrolysis activity"/>
    <property type="evidence" value="ECO:0007669"/>
    <property type="project" value="RHEA"/>
</dbReference>
<dbReference type="GO" id="GO:0003676">
    <property type="term" value="F:nucleic acid binding"/>
    <property type="evidence" value="ECO:0007669"/>
    <property type="project" value="InterPro"/>
</dbReference>
<dbReference type="GO" id="GO:0003724">
    <property type="term" value="F:RNA helicase activity"/>
    <property type="evidence" value="ECO:0007669"/>
    <property type="project" value="UniProtKB-EC"/>
</dbReference>
<dbReference type="GO" id="GO:0000348">
    <property type="term" value="P:mRNA branch site recognition"/>
    <property type="evidence" value="ECO:0007669"/>
    <property type="project" value="EnsemblFungi"/>
</dbReference>
<dbReference type="CDD" id="cd22474">
    <property type="entry name" value="KH-I_PRP5_like"/>
    <property type="match status" value="1"/>
</dbReference>
<dbReference type="CDD" id="cd18787">
    <property type="entry name" value="SF2_C_DEAD"/>
    <property type="match status" value="1"/>
</dbReference>
<dbReference type="Gene3D" id="3.40.50.300">
    <property type="entry name" value="P-loop containing nucleotide triphosphate hydrolases"/>
    <property type="match status" value="2"/>
</dbReference>
<dbReference type="InterPro" id="IPR011545">
    <property type="entry name" value="DEAD/DEAH_box_helicase_dom"/>
</dbReference>
<dbReference type="InterPro" id="IPR014001">
    <property type="entry name" value="Helicase_ATP-bd"/>
</dbReference>
<dbReference type="InterPro" id="IPR001650">
    <property type="entry name" value="Helicase_C-like"/>
</dbReference>
<dbReference type="InterPro" id="IPR027417">
    <property type="entry name" value="P-loop_NTPase"/>
</dbReference>
<dbReference type="InterPro" id="IPR056149">
    <property type="entry name" value="PRP5/DDX46/KHDC4_KH"/>
</dbReference>
<dbReference type="InterPro" id="IPR000629">
    <property type="entry name" value="RNA-helicase_DEAD-box_CS"/>
</dbReference>
<dbReference type="InterPro" id="IPR014014">
    <property type="entry name" value="RNA_helicase_DEAD_Q_motif"/>
</dbReference>
<dbReference type="PANTHER" id="PTHR47958">
    <property type="entry name" value="ATP-DEPENDENT RNA HELICASE DBP3"/>
    <property type="match status" value="1"/>
</dbReference>
<dbReference type="Pfam" id="PF00270">
    <property type="entry name" value="DEAD"/>
    <property type="match status" value="1"/>
</dbReference>
<dbReference type="Pfam" id="PF00271">
    <property type="entry name" value="Helicase_C"/>
    <property type="match status" value="1"/>
</dbReference>
<dbReference type="Pfam" id="PF23469">
    <property type="entry name" value="KH_12"/>
    <property type="match status" value="1"/>
</dbReference>
<dbReference type="SMART" id="SM00487">
    <property type="entry name" value="DEXDc"/>
    <property type="match status" value="1"/>
</dbReference>
<dbReference type="SMART" id="SM00490">
    <property type="entry name" value="HELICc"/>
    <property type="match status" value="1"/>
</dbReference>
<dbReference type="SUPFAM" id="SSF52540">
    <property type="entry name" value="P-loop containing nucleoside triphosphate hydrolases"/>
    <property type="match status" value="2"/>
</dbReference>
<dbReference type="PROSITE" id="PS00039">
    <property type="entry name" value="DEAD_ATP_HELICASE"/>
    <property type="match status" value="1"/>
</dbReference>
<dbReference type="PROSITE" id="PS51192">
    <property type="entry name" value="HELICASE_ATP_BIND_1"/>
    <property type="match status" value="1"/>
</dbReference>
<dbReference type="PROSITE" id="PS51194">
    <property type="entry name" value="HELICASE_CTER"/>
    <property type="match status" value="1"/>
</dbReference>
<dbReference type="PROSITE" id="PS51195">
    <property type="entry name" value="Q_MOTIF"/>
    <property type="match status" value="1"/>
</dbReference>
<feature type="chain" id="PRO_0000232360" description="Pre-mRNA-processing ATP-dependent RNA helicase PRP5">
    <location>
        <begin position="1"/>
        <end position="816"/>
    </location>
</feature>
<feature type="domain" description="Helicase ATP-binding" evidence="2">
    <location>
        <begin position="283"/>
        <end position="462"/>
    </location>
</feature>
<feature type="domain" description="Helicase C-terminal" evidence="3">
    <location>
        <begin position="490"/>
        <end position="640"/>
    </location>
</feature>
<feature type="region of interest" description="Disordered" evidence="4">
    <location>
        <begin position="1"/>
        <end position="48"/>
    </location>
</feature>
<feature type="short sequence motif" description="Q motif">
    <location>
        <begin position="251"/>
        <end position="280"/>
    </location>
</feature>
<feature type="short sequence motif" description="DEAD box">
    <location>
        <begin position="410"/>
        <end position="413"/>
    </location>
</feature>
<feature type="compositionally biased region" description="Basic and acidic residues" evidence="4">
    <location>
        <begin position="1"/>
        <end position="24"/>
    </location>
</feature>
<feature type="compositionally biased region" description="Low complexity" evidence="4">
    <location>
        <begin position="29"/>
        <end position="46"/>
    </location>
</feature>
<feature type="binding site" evidence="2">
    <location>
        <begin position="296"/>
        <end position="303"/>
    </location>
    <ligand>
        <name>ATP</name>
        <dbReference type="ChEBI" id="CHEBI:30616"/>
    </ligand>
</feature>
<organism>
    <name type="scientific">Candida glabrata (strain ATCC 2001 / BCRC 20586 / JCM 3761 / NBRC 0622 / NRRL Y-65 / CBS 138)</name>
    <name type="common">Yeast</name>
    <name type="synonym">Nakaseomyces glabratus</name>
    <dbReference type="NCBI Taxonomy" id="284593"/>
    <lineage>
        <taxon>Eukaryota</taxon>
        <taxon>Fungi</taxon>
        <taxon>Dikarya</taxon>
        <taxon>Ascomycota</taxon>
        <taxon>Saccharomycotina</taxon>
        <taxon>Saccharomycetes</taxon>
        <taxon>Saccharomycetales</taxon>
        <taxon>Saccharomycetaceae</taxon>
        <taxon>Nakaseomyces</taxon>
    </lineage>
</organism>
<name>PRP5_CANGA</name>
<proteinExistence type="inferred from homology"/>
<protein>
    <recommendedName>
        <fullName>Pre-mRNA-processing ATP-dependent RNA helicase PRP5</fullName>
        <ecNumber>3.6.4.13</ecNumber>
    </recommendedName>
</protein>
<accession>Q6FML5</accession>
<keyword id="KW-0067">ATP-binding</keyword>
<keyword id="KW-0347">Helicase</keyword>
<keyword id="KW-0378">Hydrolase</keyword>
<keyword id="KW-0507">mRNA processing</keyword>
<keyword id="KW-0508">mRNA splicing</keyword>
<keyword id="KW-0547">Nucleotide-binding</keyword>
<keyword id="KW-0539">Nucleus</keyword>
<keyword id="KW-1185">Reference proteome</keyword>
<evidence type="ECO:0000250" key="1"/>
<evidence type="ECO:0000255" key="2">
    <source>
        <dbReference type="PROSITE-ProRule" id="PRU00541"/>
    </source>
</evidence>
<evidence type="ECO:0000255" key="3">
    <source>
        <dbReference type="PROSITE-ProRule" id="PRU00542"/>
    </source>
</evidence>
<evidence type="ECO:0000256" key="4">
    <source>
        <dbReference type="SAM" id="MobiDB-lite"/>
    </source>
</evidence>
<evidence type="ECO:0000305" key="5"/>
<reference key="1">
    <citation type="journal article" date="2004" name="Nature">
        <title>Genome evolution in yeasts.</title>
        <authorList>
            <person name="Dujon B."/>
            <person name="Sherman D."/>
            <person name="Fischer G."/>
            <person name="Durrens P."/>
            <person name="Casaregola S."/>
            <person name="Lafontaine I."/>
            <person name="de Montigny J."/>
            <person name="Marck C."/>
            <person name="Neuveglise C."/>
            <person name="Talla E."/>
            <person name="Goffard N."/>
            <person name="Frangeul L."/>
            <person name="Aigle M."/>
            <person name="Anthouard V."/>
            <person name="Babour A."/>
            <person name="Barbe V."/>
            <person name="Barnay S."/>
            <person name="Blanchin S."/>
            <person name="Beckerich J.-M."/>
            <person name="Beyne E."/>
            <person name="Bleykasten C."/>
            <person name="Boisrame A."/>
            <person name="Boyer J."/>
            <person name="Cattolico L."/>
            <person name="Confanioleri F."/>
            <person name="de Daruvar A."/>
            <person name="Despons L."/>
            <person name="Fabre E."/>
            <person name="Fairhead C."/>
            <person name="Ferry-Dumazet H."/>
            <person name="Groppi A."/>
            <person name="Hantraye F."/>
            <person name="Hennequin C."/>
            <person name="Jauniaux N."/>
            <person name="Joyet P."/>
            <person name="Kachouri R."/>
            <person name="Kerrest A."/>
            <person name="Koszul R."/>
            <person name="Lemaire M."/>
            <person name="Lesur I."/>
            <person name="Ma L."/>
            <person name="Muller H."/>
            <person name="Nicaud J.-M."/>
            <person name="Nikolski M."/>
            <person name="Oztas S."/>
            <person name="Ozier-Kalogeropoulos O."/>
            <person name="Pellenz S."/>
            <person name="Potier S."/>
            <person name="Richard G.-F."/>
            <person name="Straub M.-L."/>
            <person name="Suleau A."/>
            <person name="Swennen D."/>
            <person name="Tekaia F."/>
            <person name="Wesolowski-Louvel M."/>
            <person name="Westhof E."/>
            <person name="Wirth B."/>
            <person name="Zeniou-Meyer M."/>
            <person name="Zivanovic Y."/>
            <person name="Bolotin-Fukuhara M."/>
            <person name="Thierry A."/>
            <person name="Bouchier C."/>
            <person name="Caudron B."/>
            <person name="Scarpelli C."/>
            <person name="Gaillardin C."/>
            <person name="Weissenbach J."/>
            <person name="Wincker P."/>
            <person name="Souciet J.-L."/>
        </authorList>
    </citation>
    <scope>NUCLEOTIDE SEQUENCE [LARGE SCALE GENOMIC DNA]</scope>
    <source>
        <strain>ATCC 2001 / BCRC 20586 / JCM 3761 / NBRC 0622 / NRRL Y-65 / CBS 138</strain>
    </source>
</reference>
<sequence>MTSIDKQKERLEKLARWKQKKSESKAVLNTQNVNTNSQSSNQNNVSDIENKLEKVKAWKKRKLEVKSDQQTPPATQSEINHTSSVRLEENIQGIKRKKRQKRVSNVFDEVKPINSTPTNDAQLSESDILEKVDLNTEDPLDSFFGNIETTEEFHFEVIDNKVNNDELLDEDNSKFDALQKEQKKLAKAKKNKNKKLLTPVNFRNIDLDPISKCLYNEPEEIKSYTEDEIADLRLDLDNIKIEGKDCPRPVTKWSQLGIPYDIIRFIKDVFSYKSLTPIQTQTIPAIMSGRDVIGISKTGSGKTISYLLPMIRHVKAQKKLRNGETGPIAVIFAPTRELAVQINEEVQKLISDLDISSICCTGGSDLKKQIDKLKTGVEIAIATPGRFIDLLSLNGGNLVSTLRISFVVMDEADRLFDFGFEPQIASVLRTVRPDRQCVLFSATFPSKVSNFASRFLDSPLQITVNAEGMVNERINQKFTICSDESDKFKELLSLLKVFNSETVDEKTIIFVSSQQICDIIEKRLTDYSEKLYSIHAGRPYNERRQNLELFKKTSNSILLCTEVMSRGLNVPEVSRVILYNSAKTFAQYVHSTGRTARGTREGTSISLLLPNELSSAYILNKAMRDKDFSECPVKEVKNLKQMAQKFEDGLKSGKYKLSTGLGGKGLENMDNSKETSNNDLDEQLKHQDNISISQEADLPDDFKFDTSVETVTNADGTIATVCKFVVNDLPQLVRWEMTKNTSISNMIRETGCSITLRGRYYPPSNVTNDNNTEPKLYLLIEATDDKAVRHCVDLLKDNARVGFMKATSESLRNTKY</sequence>